<organism>
    <name type="scientific">Mycobacterium sp. (strain JLS)</name>
    <dbReference type="NCBI Taxonomy" id="164757"/>
    <lineage>
        <taxon>Bacteria</taxon>
        <taxon>Bacillati</taxon>
        <taxon>Actinomycetota</taxon>
        <taxon>Actinomycetes</taxon>
        <taxon>Mycobacteriales</taxon>
        <taxon>Mycobacteriaceae</taxon>
        <taxon>Mycobacterium</taxon>
    </lineage>
</organism>
<name>ATPFD_MYCSJ</name>
<sequence length="443" mass="48270">MSTFIGQLIGFAVIVFLLVRFVVPPVRRMMTAQQETVRRQLEESSTAANKVAQADQQHAKAVEEAKADARRVVDEARSDAEKIAEQMRAQADAEVERIKVQGQAQVQLLRQQLIRELRSHLGTESVARARELVRDHVSDDDNRSATVDRFLDELDAMAPSDAALDDAVGSRMRSTSRESLKALVSRFDELTADVDADGLTSLGDELAAVAKLLKTEPVLGKHFGEPTEDGEGKANLAEAVLSGKISDTALEVVKAAVAQRWSDESDLDYAVRHTARLALLVRAERNDETSEVEDQLFRFSRILDSESRLSGVLSDYTTPVDGRIGLLDRLLGDQAGETTRALLAQTVELLRGERADEAVRELAELAVARRGEVVAHVNAAAELSDAQRTRLAEVLGRIYGRPASLQLHIDPDMLGGLTIAVGDEVIDGSLASRLASAETQLPD</sequence>
<reference key="1">
    <citation type="submission" date="2007-02" db="EMBL/GenBank/DDBJ databases">
        <title>Complete sequence of Mycobacterium sp. JLS.</title>
        <authorList>
            <consortium name="US DOE Joint Genome Institute"/>
            <person name="Copeland A."/>
            <person name="Lucas S."/>
            <person name="Lapidus A."/>
            <person name="Barry K."/>
            <person name="Detter J.C."/>
            <person name="Glavina del Rio T."/>
            <person name="Hammon N."/>
            <person name="Israni S."/>
            <person name="Dalin E."/>
            <person name="Tice H."/>
            <person name="Pitluck S."/>
            <person name="Chain P."/>
            <person name="Malfatti S."/>
            <person name="Shin M."/>
            <person name="Vergez L."/>
            <person name="Schmutz J."/>
            <person name="Larimer F."/>
            <person name="Land M."/>
            <person name="Hauser L."/>
            <person name="Kyrpides N."/>
            <person name="Mikhailova N."/>
            <person name="Miller C.D."/>
            <person name="Anderson A.J."/>
            <person name="Sims R.C."/>
            <person name="Richardson P."/>
        </authorList>
    </citation>
    <scope>NUCLEOTIDE SEQUENCE [LARGE SCALE GENOMIC DNA]</scope>
    <source>
        <strain>JLS</strain>
    </source>
</reference>
<gene>
    <name type="primary">atpFH</name>
    <name type="synonym">atpF</name>
    <name type="synonym">atpH</name>
    <name type="ordered locus">Mjls_3865</name>
</gene>
<proteinExistence type="inferred from homology"/>
<dbReference type="EMBL" id="CP000580">
    <property type="protein sequence ID" value="ABN99641.1"/>
    <property type="molecule type" value="Genomic_DNA"/>
</dbReference>
<dbReference type="SMR" id="A3Q3B4"/>
<dbReference type="KEGG" id="mjl:Mjls_3865"/>
<dbReference type="HOGENOM" id="CLU_722652_0_0_11"/>
<dbReference type="BioCyc" id="MSP164757:G1G8C-3905-MONOMER"/>
<dbReference type="GO" id="GO:0005886">
    <property type="term" value="C:plasma membrane"/>
    <property type="evidence" value="ECO:0007669"/>
    <property type="project" value="UniProtKB-SubCell"/>
</dbReference>
<dbReference type="GO" id="GO:0045259">
    <property type="term" value="C:proton-transporting ATP synthase complex"/>
    <property type="evidence" value="ECO:0007669"/>
    <property type="project" value="UniProtKB-KW"/>
</dbReference>
<dbReference type="GO" id="GO:0046933">
    <property type="term" value="F:proton-transporting ATP synthase activity, rotational mechanism"/>
    <property type="evidence" value="ECO:0007669"/>
    <property type="project" value="UniProtKB-UniRule"/>
</dbReference>
<dbReference type="CDD" id="cd06503">
    <property type="entry name" value="ATP-synt_Fo_b"/>
    <property type="match status" value="1"/>
</dbReference>
<dbReference type="Gene3D" id="1.20.5.620">
    <property type="entry name" value="F1F0 ATP synthase subunit B, membrane domain"/>
    <property type="match status" value="1"/>
</dbReference>
<dbReference type="HAMAP" id="MF_01398">
    <property type="entry name" value="ATP_synth_b_bprime"/>
    <property type="match status" value="1"/>
</dbReference>
<dbReference type="HAMAP" id="MF_01416">
    <property type="entry name" value="ATP_synth_delta_bact"/>
    <property type="match status" value="1"/>
</dbReference>
<dbReference type="InterPro" id="IPR028987">
    <property type="entry name" value="ATP_synth_B-like_membr_sf"/>
</dbReference>
<dbReference type="InterPro" id="IPR002146">
    <property type="entry name" value="ATP_synth_b/b'su_bac/chlpt"/>
</dbReference>
<dbReference type="InterPro" id="IPR005864">
    <property type="entry name" value="ATP_synth_F0_bsu_bac"/>
</dbReference>
<dbReference type="InterPro" id="IPR000711">
    <property type="entry name" value="ATPase_OSCP/dsu"/>
</dbReference>
<dbReference type="NCBIfam" id="TIGR01144">
    <property type="entry name" value="ATP_synt_b"/>
    <property type="match status" value="1"/>
</dbReference>
<dbReference type="NCBIfam" id="TIGR01145">
    <property type="entry name" value="ATP_synt_delta"/>
    <property type="match status" value="1"/>
</dbReference>
<dbReference type="NCBIfam" id="NF009961">
    <property type="entry name" value="PRK13428.1"/>
    <property type="match status" value="1"/>
</dbReference>
<dbReference type="NCBIfam" id="NF009967">
    <property type="entry name" value="PRK13430.1"/>
    <property type="match status" value="1"/>
</dbReference>
<dbReference type="PANTHER" id="PTHR11910">
    <property type="entry name" value="ATP SYNTHASE DELTA CHAIN"/>
    <property type="match status" value="1"/>
</dbReference>
<dbReference type="Pfam" id="PF00430">
    <property type="entry name" value="ATP-synt_B"/>
    <property type="match status" value="1"/>
</dbReference>
<dbReference type="Pfam" id="PF00213">
    <property type="entry name" value="OSCP"/>
    <property type="match status" value="1"/>
</dbReference>
<dbReference type="PRINTS" id="PR00125">
    <property type="entry name" value="ATPASEDELTA"/>
</dbReference>
<dbReference type="SUPFAM" id="SSF81573">
    <property type="entry name" value="F1F0 ATP synthase subunit B, membrane domain"/>
    <property type="match status" value="1"/>
</dbReference>
<feature type="chain" id="PRO_0000368893" description="ATP synthase subunit b-delta">
    <location>
        <begin position="1"/>
        <end position="443"/>
    </location>
</feature>
<feature type="transmembrane region" description="Helical" evidence="2">
    <location>
        <begin position="4"/>
        <end position="24"/>
    </location>
</feature>
<feature type="region of interest" description="ATP synthase subunit b">
    <location>
        <begin position="1"/>
        <end position="168"/>
    </location>
</feature>
<feature type="region of interest" description="ATP synthase subunit delta">
    <location>
        <begin position="169"/>
        <end position="443"/>
    </location>
</feature>
<comment type="function">
    <text evidence="1">F(1)F(0) ATP synthase produces ATP from ADP in the presence of a proton or sodium gradient. F-type ATPases consist of two structural domains, F(1) containing the extramembraneous catalytic core and F(0) containing the membrane proton channel, linked together by a central stalk and a peripheral stalk. During catalysis, ATP synthesis in the catalytic domain of F(1) is coupled via a rotary mechanism of the central stalk subunits to proton translocation (By similarity).</text>
</comment>
<comment type="function">
    <text evidence="1">This fusion protein includes a component of the F(0) channel (subunit b) and of the F(1) subunit (subunit delta). Two copies of subunit b and one of delta together form the peripheral 'stator' stalk which links F(1) to F(0) (By similarity).</text>
</comment>
<comment type="subunit">
    <text evidence="1">F-type ATPases have 2 components, F(1) - the catalytic core - and F(0) - the membrane proton channel. F(1) has five subunits: alpha(3), beta(3), gamma(1), delta(1), epsilon(1). F(0) has three main subunits: a(1), b(2) and c(10-14). The alpha and beta chains form an alternating ring which encloses part of the gamma chain. F(1) is attached to F(0) by a central stalk formed by the gamma and epsilon chains, while a peripheral stalk is formed by the delta and b chains (By similarity).</text>
</comment>
<comment type="subcellular location">
    <subcellularLocation>
        <location evidence="1">Cell membrane</location>
        <topology evidence="1">Single-pass membrane protein</topology>
    </subcellularLocation>
</comment>
<comment type="similarity">
    <text evidence="3">In the N-terminal section; belongs to the ATPase B chain family.</text>
</comment>
<comment type="similarity">
    <text evidence="3">In the C-terminal section; belongs to the ATPase delta chain family.</text>
</comment>
<protein>
    <recommendedName>
        <fullName>ATP synthase subunit b-delta</fullName>
    </recommendedName>
    <domain>
        <recommendedName>
            <fullName>ATP synthase subunit b</fullName>
        </recommendedName>
        <alternativeName>
            <fullName>ATP synthase F(0) sector subunit b 2</fullName>
        </alternativeName>
        <alternativeName>
            <fullName>ATPase subunit I 2</fullName>
        </alternativeName>
        <alternativeName>
            <fullName>F-type ATPase subunit b 2</fullName>
            <shortName>F-ATPase subunit b 2</shortName>
        </alternativeName>
    </domain>
    <domain>
        <recommendedName>
            <fullName>ATP synthase subunit delta</fullName>
        </recommendedName>
        <alternativeName>
            <fullName>ATP synthase F(1) sector subunit delta</fullName>
        </alternativeName>
        <alternativeName>
            <fullName>F-type ATPase subunit delta</fullName>
            <shortName>F-ATPase subunit delta</shortName>
        </alternativeName>
    </domain>
</protein>
<evidence type="ECO:0000250" key="1"/>
<evidence type="ECO:0000255" key="2"/>
<evidence type="ECO:0000305" key="3"/>
<keyword id="KW-0066">ATP synthesis</keyword>
<keyword id="KW-1003">Cell membrane</keyword>
<keyword id="KW-0138">CF(0)</keyword>
<keyword id="KW-0375">Hydrogen ion transport</keyword>
<keyword id="KW-0406">Ion transport</keyword>
<keyword id="KW-0472">Membrane</keyword>
<keyword id="KW-0511">Multifunctional enzyme</keyword>
<keyword id="KW-0812">Transmembrane</keyword>
<keyword id="KW-1133">Transmembrane helix</keyword>
<keyword id="KW-0813">Transport</keyword>
<accession>A3Q3B4</accession>